<proteinExistence type="predicted"/>
<dbReference type="EMBL" id="X89514">
    <property type="protein sequence ID" value="CAA61689.1"/>
    <property type="molecule type" value="Genomic_DNA"/>
</dbReference>
<dbReference type="EMBL" id="U53878">
    <property type="protein sequence ID" value="AAB67556.1"/>
    <property type="molecule type" value="Genomic_DNA"/>
</dbReference>
<dbReference type="EMBL" id="Z73283">
    <property type="protein sequence ID" value="CAA97678.1"/>
    <property type="molecule type" value="Genomic_DNA"/>
</dbReference>
<dbReference type="EMBL" id="BK006945">
    <property type="protein sequence ID" value="DAA80314.1"/>
    <property type="molecule type" value="Genomic_DNA"/>
</dbReference>
<dbReference type="PIR" id="S64948">
    <property type="entry name" value="S64948"/>
</dbReference>
<dbReference type="RefSeq" id="NP_001335794.1">
    <property type="nucleotide sequence ID" value="NM_001348854.1"/>
</dbReference>
<dbReference type="FunCoup" id="Q12528">
    <property type="interactions" value="44"/>
</dbReference>
<dbReference type="IntAct" id="Q12528">
    <property type="interactions" value="1"/>
</dbReference>
<dbReference type="STRING" id="4932.YLR111W"/>
<dbReference type="PaxDb" id="4932-YLR111W"/>
<dbReference type="EnsemblFungi" id="YLR111W_mRNA">
    <property type="protein sequence ID" value="YLR111W"/>
    <property type="gene ID" value="YLR111W"/>
</dbReference>
<dbReference type="GeneID" id="850801"/>
<dbReference type="AGR" id="SGD:S000004101"/>
<dbReference type="SGD" id="S000004101">
    <property type="gene designation" value="YLR111W"/>
</dbReference>
<dbReference type="HOGENOM" id="CLU_2186015_0_0_1"/>
<dbReference type="InParanoid" id="Q12528"/>
<dbReference type="OrthoDB" id="10290065at2759"/>
<dbReference type="PRO" id="PR:Q12528"/>
<dbReference type="Proteomes" id="UP000002311">
    <property type="component" value="Chromosome XII"/>
</dbReference>
<dbReference type="RNAct" id="Q12528">
    <property type="molecule type" value="protein"/>
</dbReference>
<dbReference type="GO" id="GO:0016020">
    <property type="term" value="C:membrane"/>
    <property type="evidence" value="ECO:0007669"/>
    <property type="project" value="UniProtKB-SubCell"/>
</dbReference>
<reference key="1">
    <citation type="journal article" date="1997" name="Yeast">
        <title>Sequence analysis of a 37.6 kbp cosmid clone from the right arm of Saccharomyces cerevisiae chromosome XII, carrying YAP3, HOG1, SNR6, tRNA-Arg3 and 23 new open reading frames, among which several homologies to proteins involved in cell division control and to mammalian growth factors and other animal proteins are found.</title>
        <authorList>
            <person name="Verhasselt P."/>
            <person name="Volckaert G."/>
        </authorList>
    </citation>
    <scope>NUCLEOTIDE SEQUENCE [GENOMIC DNA]</scope>
    <source>
        <strain>ATCC 90840 / EAY235 / FY23</strain>
    </source>
</reference>
<reference key="2">
    <citation type="journal article" date="1997" name="Nature">
        <title>The nucleotide sequence of Saccharomyces cerevisiae chromosome XII.</title>
        <authorList>
            <person name="Johnston M."/>
            <person name="Hillier L.W."/>
            <person name="Riles L."/>
            <person name="Albermann K."/>
            <person name="Andre B."/>
            <person name="Ansorge W."/>
            <person name="Benes V."/>
            <person name="Brueckner M."/>
            <person name="Delius H."/>
            <person name="Dubois E."/>
            <person name="Duesterhoeft A."/>
            <person name="Entian K.-D."/>
            <person name="Floeth M."/>
            <person name="Goffeau A."/>
            <person name="Hebling U."/>
            <person name="Heumann K."/>
            <person name="Heuss-Neitzel D."/>
            <person name="Hilbert H."/>
            <person name="Hilger F."/>
            <person name="Kleine K."/>
            <person name="Koetter P."/>
            <person name="Louis E.J."/>
            <person name="Messenguy F."/>
            <person name="Mewes H.-W."/>
            <person name="Miosga T."/>
            <person name="Moestl D."/>
            <person name="Mueller-Auer S."/>
            <person name="Nentwich U."/>
            <person name="Obermaier B."/>
            <person name="Piravandi E."/>
            <person name="Pohl T.M."/>
            <person name="Portetelle D."/>
            <person name="Purnelle B."/>
            <person name="Rechmann S."/>
            <person name="Rieger M."/>
            <person name="Rinke M."/>
            <person name="Rose M."/>
            <person name="Scharfe M."/>
            <person name="Scherens B."/>
            <person name="Scholler P."/>
            <person name="Schwager C."/>
            <person name="Schwarz S."/>
            <person name="Underwood A.P."/>
            <person name="Urrestarazu L.A."/>
            <person name="Vandenbol M."/>
            <person name="Verhasselt P."/>
            <person name="Vierendeels F."/>
            <person name="Voet M."/>
            <person name="Volckaert G."/>
            <person name="Voss H."/>
            <person name="Wambutt R."/>
            <person name="Wedler E."/>
            <person name="Wedler H."/>
            <person name="Zimmermann F.K."/>
            <person name="Zollner A."/>
            <person name="Hani J."/>
            <person name="Hoheisel J.D."/>
        </authorList>
    </citation>
    <scope>NUCLEOTIDE SEQUENCE [LARGE SCALE GENOMIC DNA]</scope>
    <source>
        <strain>ATCC 204508 / S288c</strain>
    </source>
</reference>
<reference key="3">
    <citation type="journal article" date="2014" name="G3 (Bethesda)">
        <title>The reference genome sequence of Saccharomyces cerevisiae: Then and now.</title>
        <authorList>
            <person name="Engel S.R."/>
            <person name="Dietrich F.S."/>
            <person name="Fisk D.G."/>
            <person name="Binkley G."/>
            <person name="Balakrishnan R."/>
            <person name="Costanzo M.C."/>
            <person name="Dwight S.S."/>
            <person name="Hitz B.C."/>
            <person name="Karra K."/>
            <person name="Nash R.S."/>
            <person name="Weng S."/>
            <person name="Wong E.D."/>
            <person name="Lloyd P."/>
            <person name="Skrzypek M.S."/>
            <person name="Miyasato S.R."/>
            <person name="Simison M."/>
            <person name="Cherry J.M."/>
        </authorList>
    </citation>
    <scope>GENOME REANNOTATION</scope>
    <source>
        <strain>ATCC 204508 / S288c</strain>
    </source>
</reference>
<feature type="chain" id="PRO_0000299611" description="Uncharacterized protein YLR111W">
    <location>
        <begin position="1"/>
        <end position="110"/>
    </location>
</feature>
<feature type="transmembrane region" description="Helical" evidence="1">
    <location>
        <begin position="29"/>
        <end position="49"/>
    </location>
</feature>
<gene>
    <name type="ordered locus">YLR111W</name>
    <name type="ORF">L2925</name>
    <name type="ORF">L9354.4</name>
</gene>
<keyword id="KW-0472">Membrane</keyword>
<keyword id="KW-1185">Reference proteome</keyword>
<keyword id="KW-0812">Transmembrane</keyword>
<keyword id="KW-1133">Transmembrane helix</keyword>
<organism>
    <name type="scientific">Saccharomyces cerevisiae (strain ATCC 204508 / S288c)</name>
    <name type="common">Baker's yeast</name>
    <dbReference type="NCBI Taxonomy" id="559292"/>
    <lineage>
        <taxon>Eukaryota</taxon>
        <taxon>Fungi</taxon>
        <taxon>Dikarya</taxon>
        <taxon>Ascomycota</taxon>
        <taxon>Saccharomycotina</taxon>
        <taxon>Saccharomycetes</taxon>
        <taxon>Saccharomycetales</taxon>
        <taxon>Saccharomycetaceae</taxon>
        <taxon>Saccharomyces</taxon>
    </lineage>
</organism>
<evidence type="ECO:0000255" key="1"/>
<evidence type="ECO:0000305" key="2"/>
<accession>Q12528</accession>
<accession>A0A1S0T096</accession>
<sequence length="110" mass="12655">MGNSKTNGFFTPEKYLYGIIQGLPPTLRGLAFIFFFLVAFYFFPAFWDLCGVLRGARGKGFPKRKSDANSQHSKQFWTHSDFPIWFLRVLIPTRASINSMKYPHTAALVR</sequence>
<protein>
    <recommendedName>
        <fullName>Uncharacterized protein YLR111W</fullName>
    </recommendedName>
</protein>
<name>YL111_YEAST</name>
<comment type="subcellular location">
    <subcellularLocation>
        <location evidence="2">Membrane</location>
        <topology evidence="2">Single-pass membrane protein</topology>
    </subcellularLocation>
</comment>